<name>HIS7_CHLPD</name>
<keyword id="KW-0028">Amino-acid biosynthesis</keyword>
<keyword id="KW-0963">Cytoplasm</keyword>
<keyword id="KW-0368">Histidine biosynthesis</keyword>
<keyword id="KW-0456">Lyase</keyword>
<keyword id="KW-1185">Reference proteome</keyword>
<accession>A1BF00</accession>
<organism>
    <name type="scientific">Chlorobium phaeobacteroides (strain DSM 266 / SMG 266 / 2430)</name>
    <dbReference type="NCBI Taxonomy" id="290317"/>
    <lineage>
        <taxon>Bacteria</taxon>
        <taxon>Pseudomonadati</taxon>
        <taxon>Chlorobiota</taxon>
        <taxon>Chlorobiia</taxon>
        <taxon>Chlorobiales</taxon>
        <taxon>Chlorobiaceae</taxon>
        <taxon>Chlorobium/Pelodictyon group</taxon>
        <taxon>Chlorobium</taxon>
    </lineage>
</organism>
<proteinExistence type="inferred from homology"/>
<evidence type="ECO:0000255" key="1">
    <source>
        <dbReference type="HAMAP-Rule" id="MF_00076"/>
    </source>
</evidence>
<feature type="chain" id="PRO_0000336302" description="Imidazoleglycerol-phosphate dehydratase">
    <location>
        <begin position="1"/>
        <end position="200"/>
    </location>
</feature>
<reference key="1">
    <citation type="submission" date="2006-12" db="EMBL/GenBank/DDBJ databases">
        <title>Complete sequence of Chlorobium phaeobacteroides DSM 266.</title>
        <authorList>
            <consortium name="US DOE Joint Genome Institute"/>
            <person name="Copeland A."/>
            <person name="Lucas S."/>
            <person name="Lapidus A."/>
            <person name="Barry K."/>
            <person name="Detter J.C."/>
            <person name="Glavina del Rio T."/>
            <person name="Hammon N."/>
            <person name="Israni S."/>
            <person name="Pitluck S."/>
            <person name="Goltsman E."/>
            <person name="Schmutz J."/>
            <person name="Larimer F."/>
            <person name="Land M."/>
            <person name="Hauser L."/>
            <person name="Mikhailova N."/>
            <person name="Li T."/>
            <person name="Overmann J."/>
            <person name="Bryant D.A."/>
            <person name="Richardson P."/>
        </authorList>
    </citation>
    <scope>NUCLEOTIDE SEQUENCE [LARGE SCALE GENOMIC DNA]</scope>
    <source>
        <strain>DSM 266 / SMG 266 / 2430</strain>
    </source>
</reference>
<protein>
    <recommendedName>
        <fullName evidence="1">Imidazoleglycerol-phosphate dehydratase</fullName>
        <shortName evidence="1">IGPD</shortName>
        <ecNumber evidence="1">4.2.1.19</ecNumber>
    </recommendedName>
</protein>
<comment type="catalytic activity">
    <reaction evidence="1">
        <text>D-erythro-1-(imidazol-4-yl)glycerol 3-phosphate = 3-(imidazol-4-yl)-2-oxopropyl phosphate + H2O</text>
        <dbReference type="Rhea" id="RHEA:11040"/>
        <dbReference type="ChEBI" id="CHEBI:15377"/>
        <dbReference type="ChEBI" id="CHEBI:57766"/>
        <dbReference type="ChEBI" id="CHEBI:58278"/>
        <dbReference type="EC" id="4.2.1.19"/>
    </reaction>
</comment>
<comment type="pathway">
    <text evidence="1">Amino-acid biosynthesis; L-histidine biosynthesis; L-histidine from 5-phospho-alpha-D-ribose 1-diphosphate: step 6/9.</text>
</comment>
<comment type="subcellular location">
    <subcellularLocation>
        <location evidence="1">Cytoplasm</location>
    </subcellularLocation>
</comment>
<comment type="similarity">
    <text evidence="1">Belongs to the imidazoleglycerol-phosphate dehydratase family.</text>
</comment>
<sequence>MPENVVNPVRTATVSRKTKETDITVTVLIDGTGHGSINSGVAFLDHMLANFCRHSGFDMSLVCNGDLDVDDHHSVEDVALVIGSAISEALLDKTGLQRYGWAIIPMDEALARCALDLGGRSYCVFNAEFKRPVIEGFSTEMVEHFFVSLSRTMQANIHLAILEGKNTHHKIEALFKSFAYAMKDAVRITGTTIPSTKGKL</sequence>
<dbReference type="EC" id="4.2.1.19" evidence="1"/>
<dbReference type="EMBL" id="CP000492">
    <property type="protein sequence ID" value="ABL64977.1"/>
    <property type="molecule type" value="Genomic_DNA"/>
</dbReference>
<dbReference type="RefSeq" id="WP_011744804.1">
    <property type="nucleotide sequence ID" value="NC_008639.1"/>
</dbReference>
<dbReference type="SMR" id="A1BF00"/>
<dbReference type="STRING" id="290317.Cpha266_0929"/>
<dbReference type="KEGG" id="cph:Cpha266_0929"/>
<dbReference type="eggNOG" id="COG0131">
    <property type="taxonomic scope" value="Bacteria"/>
</dbReference>
<dbReference type="HOGENOM" id="CLU_044308_3_0_10"/>
<dbReference type="OrthoDB" id="9790411at2"/>
<dbReference type="UniPathway" id="UPA00031">
    <property type="reaction ID" value="UER00011"/>
</dbReference>
<dbReference type="Proteomes" id="UP000008701">
    <property type="component" value="Chromosome"/>
</dbReference>
<dbReference type="GO" id="GO:0005737">
    <property type="term" value="C:cytoplasm"/>
    <property type="evidence" value="ECO:0007669"/>
    <property type="project" value="UniProtKB-SubCell"/>
</dbReference>
<dbReference type="GO" id="GO:0004424">
    <property type="term" value="F:imidazoleglycerol-phosphate dehydratase activity"/>
    <property type="evidence" value="ECO:0007669"/>
    <property type="project" value="UniProtKB-UniRule"/>
</dbReference>
<dbReference type="GO" id="GO:0000105">
    <property type="term" value="P:L-histidine biosynthetic process"/>
    <property type="evidence" value="ECO:0007669"/>
    <property type="project" value="UniProtKB-UniRule"/>
</dbReference>
<dbReference type="CDD" id="cd07914">
    <property type="entry name" value="IGPD"/>
    <property type="match status" value="1"/>
</dbReference>
<dbReference type="FunFam" id="3.30.230.40:FF:000001">
    <property type="entry name" value="Imidazoleglycerol-phosphate dehydratase HisB"/>
    <property type="match status" value="1"/>
</dbReference>
<dbReference type="FunFam" id="3.30.230.40:FF:000003">
    <property type="entry name" value="Imidazoleglycerol-phosphate dehydratase HisB"/>
    <property type="match status" value="1"/>
</dbReference>
<dbReference type="Gene3D" id="3.30.230.40">
    <property type="entry name" value="Imidazole glycerol phosphate dehydratase, domain 1"/>
    <property type="match status" value="2"/>
</dbReference>
<dbReference type="HAMAP" id="MF_00076">
    <property type="entry name" value="HisB"/>
    <property type="match status" value="1"/>
</dbReference>
<dbReference type="InterPro" id="IPR038494">
    <property type="entry name" value="IGPD_sf"/>
</dbReference>
<dbReference type="InterPro" id="IPR000807">
    <property type="entry name" value="ImidazoleglycerolP_deHydtase"/>
</dbReference>
<dbReference type="InterPro" id="IPR020565">
    <property type="entry name" value="ImidazoleglycerP_deHydtase_CS"/>
</dbReference>
<dbReference type="InterPro" id="IPR020568">
    <property type="entry name" value="Ribosomal_Su5_D2-typ_SF"/>
</dbReference>
<dbReference type="NCBIfam" id="NF002111">
    <property type="entry name" value="PRK00951.2-1"/>
    <property type="match status" value="1"/>
</dbReference>
<dbReference type="NCBIfam" id="NF002114">
    <property type="entry name" value="PRK00951.2-4"/>
    <property type="match status" value="1"/>
</dbReference>
<dbReference type="PANTHER" id="PTHR23133:SF2">
    <property type="entry name" value="IMIDAZOLEGLYCEROL-PHOSPHATE DEHYDRATASE"/>
    <property type="match status" value="1"/>
</dbReference>
<dbReference type="PANTHER" id="PTHR23133">
    <property type="entry name" value="IMIDAZOLEGLYCEROL-PHOSPHATE DEHYDRATASE HIS7"/>
    <property type="match status" value="1"/>
</dbReference>
<dbReference type="Pfam" id="PF00475">
    <property type="entry name" value="IGPD"/>
    <property type="match status" value="1"/>
</dbReference>
<dbReference type="SUPFAM" id="SSF54211">
    <property type="entry name" value="Ribosomal protein S5 domain 2-like"/>
    <property type="match status" value="2"/>
</dbReference>
<dbReference type="PROSITE" id="PS00954">
    <property type="entry name" value="IGP_DEHYDRATASE_1"/>
    <property type="match status" value="1"/>
</dbReference>
<dbReference type="PROSITE" id="PS00955">
    <property type="entry name" value="IGP_DEHYDRATASE_2"/>
    <property type="match status" value="1"/>
</dbReference>
<gene>
    <name evidence="1" type="primary">hisB</name>
    <name type="ordered locus">Cpha266_0929</name>
</gene>